<comment type="function">
    <text evidence="1">Catalyzes the reversible phosphorylation of S-methyl-5'-thioinosine (MTI) to hypoxanthine and 5-methylthioribose-1-phosphate. Involved in the breakdown of S-methyl-5'-thioadenosine (MTA), a major by-product of polyamine biosynthesis. Catabolism of (MTA) occurs via deamination to MTI and phosphorolysis to hypoxanthine.</text>
</comment>
<comment type="catalytic activity">
    <reaction evidence="1">
        <text>S-methyl-5'-thioinosine + phosphate = 5-(methylsulfanyl)-alpha-D-ribose 1-phosphate + hypoxanthine</text>
        <dbReference type="Rhea" id="RHEA:30643"/>
        <dbReference type="ChEBI" id="CHEBI:17368"/>
        <dbReference type="ChEBI" id="CHEBI:43474"/>
        <dbReference type="ChEBI" id="CHEBI:48595"/>
        <dbReference type="ChEBI" id="CHEBI:58533"/>
        <dbReference type="EC" id="2.4.2.44"/>
    </reaction>
</comment>
<comment type="pathway">
    <text evidence="1">Purine metabolism; purine nucleoside salvage.</text>
</comment>
<comment type="subunit">
    <text evidence="1">Homotrimer.</text>
</comment>
<comment type="miscellaneous">
    <text evidence="1">Although this enzyme belongs to the family of MTA phosphorylases based on sequence homology, it has been shown that conserved amino acid substitutions in the substrate binding pocket convert the substrate specificity of this enzyme from 6-aminopurines to 6-oxopurines.</text>
</comment>
<comment type="similarity">
    <text evidence="1">Belongs to the PNP/MTAP phosphorylase family. MTAP subfamily.</text>
</comment>
<sequence>MDEEAEVAEIAVLGGVGFNSHKDCESHPVTTPYGRITAYLTSIKGRSVVIIPRHAEEIHIPPHRVNYRGNIWAAHSLGAKRVISTNSVGSMRGHPVGSFVVLDDFIDFTRSRPSTFHDDKTVHVDVSEPYCPEIRASLRYSLEKRGISYTEGVYACTEGPRFETRAEIRMMSQFADVVGMTGVPEVVLAKELSLCYASLSIVTNQACGMTTQKLTADEVTEVVGKAQASIFKILSDAIGKIPETRNCMCRFAKEGACL</sequence>
<protein>
    <recommendedName>
        <fullName evidence="1">Probable S-methyl-5'-thioinosine phosphorylase</fullName>
        <ecNumber evidence="1">2.4.2.44</ecNumber>
    </recommendedName>
    <alternativeName>
        <fullName evidence="1">5'-methylthioinosine phosphorylase</fullName>
        <shortName evidence="1">MTI phosphorylase</shortName>
        <shortName evidence="1">MTIP</shortName>
    </alternativeName>
</protein>
<keyword id="KW-0328">Glycosyltransferase</keyword>
<keyword id="KW-0660">Purine salvage</keyword>
<keyword id="KW-1185">Reference proteome</keyword>
<keyword id="KW-0808">Transferase</keyword>
<proteinExistence type="inferred from homology"/>
<feature type="chain" id="PRO_0000415143" description="Probable S-methyl-5'-thioinosine phosphorylase">
    <location>
        <begin position="1"/>
        <end position="258"/>
    </location>
</feature>
<feature type="binding site" evidence="1">
    <location>
        <begin position="53"/>
        <end position="54"/>
    </location>
    <ligand>
        <name>phosphate</name>
        <dbReference type="ChEBI" id="CHEBI:43474"/>
    </ligand>
</feature>
<feature type="binding site" evidence="1">
    <location>
        <position position="180"/>
    </location>
    <ligand>
        <name>substrate</name>
    </ligand>
</feature>
<feature type="binding site" evidence="1">
    <location>
        <position position="181"/>
    </location>
    <ligand>
        <name>phosphate</name>
        <dbReference type="ChEBI" id="CHEBI:43474"/>
    </ligand>
</feature>
<feature type="binding site" evidence="1">
    <location>
        <begin position="204"/>
        <end position="206"/>
    </location>
    <ligand>
        <name>substrate</name>
    </ligand>
</feature>
<feature type="site" description="Important for substrate specificity" evidence="1">
    <location>
        <position position="163"/>
    </location>
</feature>
<feature type="site" description="Important for substrate specificity" evidence="1">
    <location>
        <position position="216"/>
    </location>
</feature>
<dbReference type="EC" id="2.4.2.44" evidence="1"/>
<dbReference type="EMBL" id="AE010299">
    <property type="protein sequence ID" value="AAM04824.1"/>
    <property type="molecule type" value="Genomic_DNA"/>
</dbReference>
<dbReference type="RefSeq" id="WP_011021425.1">
    <property type="nucleotide sequence ID" value="NC_003552.1"/>
</dbReference>
<dbReference type="SMR" id="Q8TQX8"/>
<dbReference type="FunCoup" id="Q8TQX8">
    <property type="interactions" value="144"/>
</dbReference>
<dbReference type="STRING" id="188937.MA_1409"/>
<dbReference type="EnsemblBacteria" id="AAM04824">
    <property type="protein sequence ID" value="AAM04824"/>
    <property type="gene ID" value="MA_1409"/>
</dbReference>
<dbReference type="GeneID" id="1473297"/>
<dbReference type="KEGG" id="mac:MA_1409"/>
<dbReference type="HOGENOM" id="CLU_054456_0_2_2"/>
<dbReference type="InParanoid" id="Q8TQX8"/>
<dbReference type="OrthoDB" id="7681at2157"/>
<dbReference type="PhylomeDB" id="Q8TQX8"/>
<dbReference type="UniPathway" id="UPA00606"/>
<dbReference type="Proteomes" id="UP000002487">
    <property type="component" value="Chromosome"/>
</dbReference>
<dbReference type="GO" id="GO:0005829">
    <property type="term" value="C:cytosol"/>
    <property type="evidence" value="ECO:0000318"/>
    <property type="project" value="GO_Central"/>
</dbReference>
<dbReference type="GO" id="GO:0017061">
    <property type="term" value="F:S-methyl-5-thioadenosine phosphorylase activity"/>
    <property type="evidence" value="ECO:0000318"/>
    <property type="project" value="GO_Central"/>
</dbReference>
<dbReference type="GO" id="GO:0019509">
    <property type="term" value="P:L-methionine salvage from methylthioadenosine"/>
    <property type="evidence" value="ECO:0000318"/>
    <property type="project" value="GO_Central"/>
</dbReference>
<dbReference type="GO" id="GO:0006166">
    <property type="term" value="P:purine ribonucleoside salvage"/>
    <property type="evidence" value="ECO:0007669"/>
    <property type="project" value="UniProtKB-UniRule"/>
</dbReference>
<dbReference type="CDD" id="cd09010">
    <property type="entry name" value="MTAP_SsMTAPII_like_MTIP"/>
    <property type="match status" value="1"/>
</dbReference>
<dbReference type="Gene3D" id="3.40.50.1580">
    <property type="entry name" value="Nucleoside phosphorylase domain"/>
    <property type="match status" value="1"/>
</dbReference>
<dbReference type="HAMAP" id="MF_01963">
    <property type="entry name" value="MTAP"/>
    <property type="match status" value="1"/>
</dbReference>
<dbReference type="InterPro" id="IPR010044">
    <property type="entry name" value="MTAP"/>
</dbReference>
<dbReference type="InterPro" id="IPR000845">
    <property type="entry name" value="Nucleoside_phosphorylase_d"/>
</dbReference>
<dbReference type="InterPro" id="IPR035994">
    <property type="entry name" value="Nucleoside_phosphorylase_sf"/>
</dbReference>
<dbReference type="NCBIfam" id="TIGR01694">
    <property type="entry name" value="MTAP"/>
    <property type="match status" value="1"/>
</dbReference>
<dbReference type="PANTHER" id="PTHR42679">
    <property type="entry name" value="S-METHYL-5'-THIOADENOSINE PHOSPHORYLASE"/>
    <property type="match status" value="1"/>
</dbReference>
<dbReference type="PANTHER" id="PTHR42679:SF2">
    <property type="entry name" value="S-METHYL-5'-THIOADENOSINE PHOSPHORYLASE"/>
    <property type="match status" value="1"/>
</dbReference>
<dbReference type="Pfam" id="PF01048">
    <property type="entry name" value="PNP_UDP_1"/>
    <property type="match status" value="1"/>
</dbReference>
<dbReference type="SUPFAM" id="SSF53167">
    <property type="entry name" value="Purine and uridine phosphorylases"/>
    <property type="match status" value="1"/>
</dbReference>
<reference key="1">
    <citation type="journal article" date="2002" name="Genome Res.">
        <title>The genome of Methanosarcina acetivorans reveals extensive metabolic and physiological diversity.</title>
        <authorList>
            <person name="Galagan J.E."/>
            <person name="Nusbaum C."/>
            <person name="Roy A."/>
            <person name="Endrizzi M.G."/>
            <person name="Macdonald P."/>
            <person name="FitzHugh W."/>
            <person name="Calvo S."/>
            <person name="Engels R."/>
            <person name="Smirnov S."/>
            <person name="Atnoor D."/>
            <person name="Brown A."/>
            <person name="Allen N."/>
            <person name="Naylor J."/>
            <person name="Stange-Thomann N."/>
            <person name="DeArellano K."/>
            <person name="Johnson R."/>
            <person name="Linton L."/>
            <person name="McEwan P."/>
            <person name="McKernan K."/>
            <person name="Talamas J."/>
            <person name="Tirrell A."/>
            <person name="Ye W."/>
            <person name="Zimmer A."/>
            <person name="Barber R.D."/>
            <person name="Cann I."/>
            <person name="Graham D.E."/>
            <person name="Grahame D.A."/>
            <person name="Guss A.M."/>
            <person name="Hedderich R."/>
            <person name="Ingram-Smith C."/>
            <person name="Kuettner H.C."/>
            <person name="Krzycki J.A."/>
            <person name="Leigh J.A."/>
            <person name="Li W."/>
            <person name="Liu J."/>
            <person name="Mukhopadhyay B."/>
            <person name="Reeve J.N."/>
            <person name="Smith K."/>
            <person name="Springer T.A."/>
            <person name="Umayam L.A."/>
            <person name="White O."/>
            <person name="White R.H."/>
            <person name="de Macario E.C."/>
            <person name="Ferry J.G."/>
            <person name="Jarrell K.F."/>
            <person name="Jing H."/>
            <person name="Macario A.J.L."/>
            <person name="Paulsen I.T."/>
            <person name="Pritchett M."/>
            <person name="Sowers K.R."/>
            <person name="Swanson R.V."/>
            <person name="Zinder S.H."/>
            <person name="Lander E."/>
            <person name="Metcalf W.W."/>
            <person name="Birren B."/>
        </authorList>
    </citation>
    <scope>NUCLEOTIDE SEQUENCE [LARGE SCALE GENOMIC DNA]</scope>
    <source>
        <strain>ATCC 35395 / DSM 2834 / JCM 12185 / C2A</strain>
    </source>
</reference>
<accession>Q8TQX8</accession>
<gene>
    <name type="ordered locus">MA_1409</name>
</gene>
<organism>
    <name type="scientific">Methanosarcina acetivorans (strain ATCC 35395 / DSM 2834 / JCM 12185 / C2A)</name>
    <dbReference type="NCBI Taxonomy" id="188937"/>
    <lineage>
        <taxon>Archaea</taxon>
        <taxon>Methanobacteriati</taxon>
        <taxon>Methanobacteriota</taxon>
        <taxon>Stenosarchaea group</taxon>
        <taxon>Methanomicrobia</taxon>
        <taxon>Methanosarcinales</taxon>
        <taxon>Methanosarcinaceae</taxon>
        <taxon>Methanosarcina</taxon>
    </lineage>
</organism>
<name>MTIP_METAC</name>
<evidence type="ECO:0000255" key="1">
    <source>
        <dbReference type="HAMAP-Rule" id="MF_01963"/>
    </source>
</evidence>